<organism>
    <name type="scientific">Populus nigra</name>
    <name type="common">Lombardy poplar</name>
    <dbReference type="NCBI Taxonomy" id="3691"/>
    <lineage>
        <taxon>Eukaryota</taxon>
        <taxon>Viridiplantae</taxon>
        <taxon>Streptophyta</taxon>
        <taxon>Embryophyta</taxon>
        <taxon>Tracheophyta</taxon>
        <taxon>Spermatophyta</taxon>
        <taxon>Magnoliopsida</taxon>
        <taxon>eudicotyledons</taxon>
        <taxon>Gunneridae</taxon>
        <taxon>Pentapetalae</taxon>
        <taxon>rosids</taxon>
        <taxon>fabids</taxon>
        <taxon>Malpighiales</taxon>
        <taxon>Salicaceae</taxon>
        <taxon>Saliceae</taxon>
        <taxon>Populus</taxon>
    </lineage>
</organism>
<accession>P00299</accession>
<keyword id="KW-0002">3D-structure</keyword>
<keyword id="KW-0150">Chloroplast</keyword>
<keyword id="KW-0186">Copper</keyword>
<keyword id="KW-0903">Direct protein sequencing</keyword>
<keyword id="KW-0249">Electron transport</keyword>
<keyword id="KW-0472">Membrane</keyword>
<keyword id="KW-0479">Metal-binding</keyword>
<keyword id="KW-0934">Plastid</keyword>
<keyword id="KW-0793">Thylakoid</keyword>
<keyword id="KW-0809">Transit peptide</keyword>
<keyword id="KW-0813">Transport</keyword>
<protein>
    <recommendedName>
        <fullName>Plastocyanin A, chloroplastic</fullName>
        <shortName>PCa</shortName>
    </recommendedName>
</protein>
<comment type="function">
    <text evidence="2 4">Participates in electron transfer between P700 and the cytochrome b6-f complex in photosystem I.</text>
</comment>
<comment type="cofactor">
    <cofactor evidence="1 2">
        <name>Cu(2+)</name>
        <dbReference type="ChEBI" id="CHEBI:29036"/>
    </cofactor>
    <text>The crystal structure with reduced Cu(1+) has also been determined (PubMed:22883960).</text>
</comment>
<comment type="subcellular location">
    <subcellularLocation>
        <location evidence="1 2 3 4 6">Plastid</location>
        <location evidence="1 2 3 4 6">Chloroplast thylakoid membrane</location>
        <topology evidence="1 2 3 4 6">Peripheral membrane protein</topology>
        <orientation evidence="1 2 3 4 6">Lumenal side</orientation>
    </subcellularLocation>
    <text>Loosely bound to the inner thylakoid membrane surface in chloroplasts (PubMed:1492962, PubMed:22883960, PubMed:6620385, PubMed:6698995, Ref.5).</text>
</comment>
<comment type="similarity">
    <text evidence="7">Belongs to the plastocyanin family.</text>
</comment>
<dbReference type="EMBL" id="Z50185">
    <property type="protein sequence ID" value="CAA90564.1"/>
    <property type="molecule type" value="mRNA"/>
</dbReference>
<dbReference type="PIR" id="S58209">
    <property type="entry name" value="CUPX"/>
</dbReference>
<dbReference type="PDB" id="1JXG">
    <property type="method" value="X-ray"/>
    <property type="resolution" value="1.60 A"/>
    <property type="chains" value="A/B=70-168"/>
</dbReference>
<dbReference type="PDB" id="1PLC">
    <property type="method" value="X-ray"/>
    <property type="resolution" value="1.33 A"/>
    <property type="chains" value="A=70-168"/>
</dbReference>
<dbReference type="PDB" id="1PNC">
    <property type="method" value="X-ray"/>
    <property type="resolution" value="1.60 A"/>
    <property type="chains" value="A=70-168"/>
</dbReference>
<dbReference type="PDB" id="1PND">
    <property type="method" value="X-ray"/>
    <property type="resolution" value="1.60 A"/>
    <property type="chains" value="A=70-168"/>
</dbReference>
<dbReference type="PDB" id="1TKW">
    <property type="method" value="NMR"/>
    <property type="chains" value="A=70-168"/>
</dbReference>
<dbReference type="PDB" id="2PCY">
    <property type="method" value="X-ray"/>
    <property type="resolution" value="1.80 A"/>
    <property type="chains" value="A=70-168"/>
</dbReference>
<dbReference type="PDB" id="3PCY">
    <property type="method" value="X-ray"/>
    <property type="resolution" value="1.90 A"/>
    <property type="chains" value="A=70-168"/>
</dbReference>
<dbReference type="PDB" id="4DP7">
    <property type="method" value="X-ray"/>
    <property type="resolution" value="1.08 A"/>
    <property type="chains" value="X=70-168"/>
</dbReference>
<dbReference type="PDB" id="4DP8">
    <property type="method" value="X-ray"/>
    <property type="resolution" value="1.07 A"/>
    <property type="chains" value="X=70-168"/>
</dbReference>
<dbReference type="PDB" id="4DP9">
    <property type="method" value="X-ray"/>
    <property type="resolution" value="1.00 A"/>
    <property type="chains" value="X=70-168"/>
</dbReference>
<dbReference type="PDB" id="4DPA">
    <property type="method" value="X-ray"/>
    <property type="resolution" value="1.05 A"/>
    <property type="chains" value="X=70-168"/>
</dbReference>
<dbReference type="PDB" id="4DPB">
    <property type="method" value="X-ray"/>
    <property type="resolution" value="1.00 A"/>
    <property type="chains" value="X=70-168"/>
</dbReference>
<dbReference type="PDB" id="4DPC">
    <property type="method" value="X-ray"/>
    <property type="resolution" value="1.06 A"/>
    <property type="chains" value="X=70-168"/>
</dbReference>
<dbReference type="PDB" id="4PCY">
    <property type="method" value="X-ray"/>
    <property type="resolution" value="2.15 A"/>
    <property type="chains" value="A=70-168"/>
</dbReference>
<dbReference type="PDB" id="5PCY">
    <property type="method" value="X-ray"/>
    <property type="resolution" value="1.80 A"/>
    <property type="chains" value="A=70-168"/>
</dbReference>
<dbReference type="PDB" id="6PCY">
    <property type="method" value="X-ray"/>
    <property type="resolution" value="1.90 A"/>
    <property type="chains" value="A=70-168"/>
</dbReference>
<dbReference type="PDBsum" id="1JXG"/>
<dbReference type="PDBsum" id="1PLC"/>
<dbReference type="PDBsum" id="1PNC"/>
<dbReference type="PDBsum" id="1PND"/>
<dbReference type="PDBsum" id="1TKW"/>
<dbReference type="PDBsum" id="2PCY"/>
<dbReference type="PDBsum" id="3PCY"/>
<dbReference type="PDBsum" id="4DP7"/>
<dbReference type="PDBsum" id="4DP8"/>
<dbReference type="PDBsum" id="4DP9"/>
<dbReference type="PDBsum" id="4DPA"/>
<dbReference type="PDBsum" id="4DPB"/>
<dbReference type="PDBsum" id="4DPC"/>
<dbReference type="PDBsum" id="4PCY"/>
<dbReference type="PDBsum" id="5PCY"/>
<dbReference type="PDBsum" id="6PCY"/>
<dbReference type="BMRB" id="P00299"/>
<dbReference type="SMR" id="P00299"/>
<dbReference type="EvolutionaryTrace" id="P00299"/>
<dbReference type="GO" id="GO:0009543">
    <property type="term" value="C:chloroplast thylakoid lumen"/>
    <property type="evidence" value="ECO:0007669"/>
    <property type="project" value="TreeGrafter"/>
</dbReference>
<dbReference type="GO" id="GO:0009535">
    <property type="term" value="C:chloroplast thylakoid membrane"/>
    <property type="evidence" value="ECO:0007669"/>
    <property type="project" value="UniProtKB-SubCell"/>
</dbReference>
<dbReference type="GO" id="GO:0005507">
    <property type="term" value="F:copper ion binding"/>
    <property type="evidence" value="ECO:0007669"/>
    <property type="project" value="InterPro"/>
</dbReference>
<dbReference type="GO" id="GO:0046028">
    <property type="term" value="F:electron transporter, transferring electrons from cytochrome b6/f complex of photosystem II activity"/>
    <property type="evidence" value="ECO:0007669"/>
    <property type="project" value="TreeGrafter"/>
</dbReference>
<dbReference type="CDD" id="cd04219">
    <property type="entry name" value="Plastocyanin"/>
    <property type="match status" value="1"/>
</dbReference>
<dbReference type="Gene3D" id="2.60.40.420">
    <property type="entry name" value="Cupredoxins - blue copper proteins"/>
    <property type="match status" value="1"/>
</dbReference>
<dbReference type="InterPro" id="IPR000923">
    <property type="entry name" value="BlueCu_1"/>
</dbReference>
<dbReference type="InterPro" id="IPR028871">
    <property type="entry name" value="BlueCu_1_BS"/>
</dbReference>
<dbReference type="InterPro" id="IPR001235">
    <property type="entry name" value="Copper_blue_Plastocyanin"/>
</dbReference>
<dbReference type="InterPro" id="IPR008972">
    <property type="entry name" value="Cupredoxin"/>
</dbReference>
<dbReference type="InterPro" id="IPR002387">
    <property type="entry name" value="Plastocyanin"/>
</dbReference>
<dbReference type="NCBIfam" id="TIGR02656">
    <property type="entry name" value="cyanin_plasto"/>
    <property type="match status" value="1"/>
</dbReference>
<dbReference type="PANTHER" id="PTHR34192">
    <property type="entry name" value="PLASTOCYANIN MAJOR ISOFORM, CHLOROPLASTIC-RELATED"/>
    <property type="match status" value="1"/>
</dbReference>
<dbReference type="PANTHER" id="PTHR34192:SF10">
    <property type="entry name" value="PLASTOCYANIN MAJOR ISOFORM, CHLOROPLASTIC-RELATED"/>
    <property type="match status" value="1"/>
</dbReference>
<dbReference type="Pfam" id="PF00127">
    <property type="entry name" value="Copper-bind"/>
    <property type="match status" value="1"/>
</dbReference>
<dbReference type="PRINTS" id="PR00156">
    <property type="entry name" value="COPPERBLUE"/>
</dbReference>
<dbReference type="PRINTS" id="PR00157">
    <property type="entry name" value="PLASTOCYANIN"/>
</dbReference>
<dbReference type="SUPFAM" id="SSF49503">
    <property type="entry name" value="Cupredoxins"/>
    <property type="match status" value="1"/>
</dbReference>
<dbReference type="PROSITE" id="PS00196">
    <property type="entry name" value="COPPER_BLUE"/>
    <property type="match status" value="1"/>
</dbReference>
<evidence type="ECO:0000269" key="1">
    <source>
    </source>
</evidence>
<evidence type="ECO:0000269" key="2">
    <source>
    </source>
</evidence>
<evidence type="ECO:0000269" key="3">
    <source>
    </source>
</evidence>
<evidence type="ECO:0000269" key="4">
    <source>
    </source>
</evidence>
<evidence type="ECO:0000269" key="5">
    <source ref="2"/>
</evidence>
<evidence type="ECO:0000269" key="6">
    <source ref="5"/>
</evidence>
<evidence type="ECO:0000305" key="7"/>
<evidence type="ECO:0007829" key="8">
    <source>
        <dbReference type="PDB" id="1JXG"/>
    </source>
</evidence>
<evidence type="ECO:0007829" key="9">
    <source>
        <dbReference type="PDB" id="4DP9"/>
    </source>
</evidence>
<feature type="transit peptide" description="Chloroplast" evidence="5">
    <location>
        <begin position="1"/>
        <end position="69"/>
    </location>
</feature>
<feature type="chain" id="PRO_0000002893" description="Plastocyanin A, chloroplastic">
    <location>
        <begin position="70"/>
        <end position="168"/>
    </location>
</feature>
<feature type="domain" description="Plastocyanin-like">
    <location>
        <begin position="70"/>
        <end position="168"/>
    </location>
</feature>
<feature type="binding site" evidence="1 2">
    <location>
        <position position="106"/>
    </location>
    <ligand>
        <name>Cu cation</name>
        <dbReference type="ChEBI" id="CHEBI:23378"/>
    </ligand>
</feature>
<feature type="binding site" evidence="1 2">
    <location>
        <position position="153"/>
    </location>
    <ligand>
        <name>Cu cation</name>
        <dbReference type="ChEBI" id="CHEBI:23378"/>
    </ligand>
</feature>
<feature type="binding site" evidence="1 2">
    <location>
        <position position="156"/>
    </location>
    <ligand>
        <name>Cu cation</name>
        <dbReference type="ChEBI" id="CHEBI:23378"/>
    </ligand>
</feature>
<feature type="binding site" evidence="1 2">
    <location>
        <position position="161"/>
    </location>
    <ligand>
        <name>Cu cation</name>
        <dbReference type="ChEBI" id="CHEBI:23378"/>
    </ligand>
</feature>
<feature type="strand" evidence="9">
    <location>
        <begin position="71"/>
        <end position="75"/>
    </location>
</feature>
<feature type="strand" evidence="9">
    <location>
        <begin position="83"/>
        <end position="90"/>
    </location>
</feature>
<feature type="strand" evidence="9">
    <location>
        <begin position="95"/>
        <end position="100"/>
    </location>
</feature>
<feature type="helix" evidence="8">
    <location>
        <begin position="112"/>
        <end position="114"/>
    </location>
</feature>
<feature type="helix" evidence="9">
    <location>
        <begin position="121"/>
        <end position="123"/>
    </location>
</feature>
<feature type="strand" evidence="9">
    <location>
        <begin position="138"/>
        <end position="142"/>
    </location>
</feature>
<feature type="strand" evidence="9">
    <location>
        <begin position="147"/>
        <end position="152"/>
    </location>
</feature>
<feature type="helix" evidence="9">
    <location>
        <begin position="154"/>
        <end position="156"/>
    </location>
</feature>
<feature type="turn" evidence="9">
    <location>
        <begin position="157"/>
        <end position="160"/>
    </location>
</feature>
<feature type="strand" evidence="9">
    <location>
        <begin position="162"/>
        <end position="167"/>
    </location>
</feature>
<name>PLAS1_POPNI</name>
<gene>
    <name type="primary">PETE</name>
</gene>
<proteinExistence type="evidence at protein level"/>
<reference key="1">
    <citation type="submission" date="1995-08" db="EMBL/GenBank/DDBJ databases">
        <authorList>
            <person name="Reichert J."/>
            <person name="Jenzelewski V."/>
            <person name="Haehnel W."/>
        </authorList>
    </citation>
    <scope>NUCLEOTIDE SEQUENCE [MRNA]</scope>
    <source>
        <strain>cv. Italica</strain>
        <tissue>Leaf</tissue>
    </source>
</reference>
<reference key="2">
    <citation type="journal article" date="1979" name="J. Proc. Royal Soc. N.S. Wales">
        <title>Elegance in molecular design: the copper site of photosynthetic electron-transfer protein.</title>
        <authorList>
            <person name="Freeman H.C."/>
        </authorList>
    </citation>
    <scope>PROTEIN SEQUENCE OF 70-168</scope>
    <scope>SUBCELLULAR LOCATION</scope>
    <source>
        <strain>cv. Italica</strain>
    </source>
</reference>
<reference key="3">
    <citation type="journal article" date="1984" name="J. Biol. Chem.">
        <title>The crystal structure of poplar apoplastocyanin at 1.8-A resolution. The geometry of the copper-binding site is created by the polypeptide.</title>
        <authorList>
            <person name="Garrett T.P.J."/>
            <person name="Clingeleffer D.J."/>
            <person name="Guss J.M."/>
            <person name="Rogers S.J."/>
            <person name="Freeman H.C."/>
        </authorList>
    </citation>
    <scope>X-RAY CRYSTALLOGRAPHY (1.8 ANGSTROMS) OF 70-168</scope>
    <scope>FUNCTION</scope>
    <scope>SUBCELLULAR LOCATION</scope>
</reference>
<reference key="4">
    <citation type="journal article" date="1983" name="J. Mol. Biol.">
        <title>Structure of oxidized poplar plastocyanin at 1.6-A resolution.</title>
        <authorList>
            <person name="Guss J.M."/>
            <person name="Freeman H.C."/>
        </authorList>
    </citation>
    <scope>X-RAY CRYSTALLOGRAPHY (1.6 ANGSTROMS)</scope>
    <scope>SUBCELLULAR LOCATION</scope>
</reference>
<reference key="5">
    <citation type="journal article" date="1978" name="Nature">
        <title>X-ray crystal structure analysis of plastocyanin at 2.7-A resolution.</title>
        <authorList>
            <person name="Colman P.M."/>
            <person name="Freeman H.C."/>
            <person name="Guss J.M."/>
            <person name="Murata M."/>
            <person name="Norris V.A."/>
            <person name="Ramshaw J.A.M."/>
            <person name="Venkatappa M.P."/>
        </authorList>
    </citation>
    <scope>X-RAY CRYSTALLOGRAPHY (2.7 ANGSTROMS)</scope>
    <scope>SUBCELLULAR LOCATION</scope>
</reference>
<reference key="6">
    <citation type="journal article" date="1992" name="Acta Crystallogr. B">
        <title>Accuracy and precision in protein structure analysis: restrained least-squares refinement of the structure of poplar plastocyanin at 1.33 A resolution.</title>
        <authorList>
            <person name="Guss J.M."/>
            <person name="Bartunik H.D."/>
            <person name="Freeman H.C."/>
        </authorList>
    </citation>
    <scope>X-RAY CRYSTALLOGRAPHY (1.33 ANGSTROMS) OF 70-168 IN COMPLEX WITH COPPER</scope>
    <scope>COFACTOR</scope>
    <scope>SUBCELLULAR LOCATION</scope>
</reference>
<reference key="7">
    <citation type="journal article" date="2012" name="J. Inorg. Biochem.">
        <title>Structural comparison of the poplar plastocyanin isoforms PCa and PCb sheds new light on the role of the copper site geometry in interactions with redox partners in oxygenic photosynthesis.</title>
        <authorList>
            <person name="Kachalova G.S."/>
            <person name="Shosheva A.C."/>
            <person name="Bourenkov G.P."/>
            <person name="Donchev A.A."/>
            <person name="Dimitrov M.I."/>
            <person name="Bartunik H.D."/>
        </authorList>
    </citation>
    <scope>X-RAY CRYSTALLOGRAPHY (1.00 ANGSTROMS) OF 70-168 IN COMPLEX WITH COPPER</scope>
    <scope>FUNCTION</scope>
    <scope>COFACTOR</scope>
    <scope>SUBCELLULAR LOCATION</scope>
    <source>
        <strain>cv. Italica</strain>
    </source>
</reference>
<sequence>MATVTSAAVSIPSFTGLKAGSASNAKVSASAKVSASPLPRLSIKASMKDVGAAVVATAASAMIASNAMAIDVLLGADDGSLAFVPSEFSISPGEKIVFKNNAGFPHNIVFDEDSIPSGVDASKISMSEEDLLNAKGETFEVALSNKGEYSFYCSPHQGAGMVGKVTVN</sequence>